<keyword id="KW-0333">Golgi apparatus</keyword>
<keyword id="KW-0472">Membrane</keyword>
<keyword id="KW-0653">Protein transport</keyword>
<keyword id="KW-1185">Reference proteome</keyword>
<keyword id="KW-0813">Transport</keyword>
<accession>Q21444</accession>
<accession>Q17752</accession>
<proteinExistence type="evidence at transcript level"/>
<organism>
    <name type="scientific">Caenorhabditis elegans</name>
    <dbReference type="NCBI Taxonomy" id="6239"/>
    <lineage>
        <taxon>Eukaryota</taxon>
        <taxon>Metazoa</taxon>
        <taxon>Ecdysozoa</taxon>
        <taxon>Nematoda</taxon>
        <taxon>Chromadorea</taxon>
        <taxon>Rhabditida</taxon>
        <taxon>Rhabditina</taxon>
        <taxon>Rhabditomorpha</taxon>
        <taxon>Rhabditoidea</taxon>
        <taxon>Rhabditidae</taxon>
        <taxon>Peloderinae</taxon>
        <taxon>Caenorhabditis</taxon>
    </lineage>
</organism>
<comment type="function">
    <text evidence="1">Required for normal Golgi morphology and function.</text>
</comment>
<comment type="subunit">
    <text evidence="1">Component of the conserved oligomeric Golgi complex which is composed of eight different subunits and is required for normal Golgi morphology and localization.</text>
</comment>
<comment type="subcellular location">
    <subcellularLocation>
        <location evidence="1">Golgi apparatus membrane</location>
        <topology evidence="1">Peripheral membrane protein</topology>
        <orientation evidence="1">Cytoplasmic side</orientation>
    </subcellularLocation>
</comment>
<comment type="similarity">
    <text evidence="2">Belongs to the COG2 family.</text>
</comment>
<feature type="chain" id="PRO_0000213497" description="Conserved oligomeric Golgi complex subunit 2">
    <location>
        <begin position="1"/>
        <end position="681"/>
    </location>
</feature>
<dbReference type="EMBL" id="Z34976">
    <property type="protein sequence ID" value="CAA84428.1"/>
    <property type="molecule type" value="mRNA"/>
</dbReference>
<dbReference type="EMBL" id="FO080396">
    <property type="protein sequence ID" value="CCD83558.1"/>
    <property type="molecule type" value="Genomic_DNA"/>
</dbReference>
<dbReference type="PIR" id="B53542">
    <property type="entry name" value="B53542"/>
</dbReference>
<dbReference type="PIR" id="T30098">
    <property type="entry name" value="T30098"/>
</dbReference>
<dbReference type="RefSeq" id="NP_501092.1">
    <property type="nucleotide sequence ID" value="NM_068691.8"/>
</dbReference>
<dbReference type="SMR" id="Q21444"/>
<dbReference type="BioGRID" id="42592">
    <property type="interactions" value="5"/>
</dbReference>
<dbReference type="DIP" id="DIP-26998N"/>
<dbReference type="FunCoup" id="Q21444">
    <property type="interactions" value="3240"/>
</dbReference>
<dbReference type="IntAct" id="Q21444">
    <property type="interactions" value="4"/>
</dbReference>
<dbReference type="STRING" id="6239.C06G3.10.1"/>
<dbReference type="PaxDb" id="6239-C06G3.10"/>
<dbReference type="PeptideAtlas" id="Q21444"/>
<dbReference type="EnsemblMetazoa" id="C06G3.10.1">
    <property type="protein sequence ID" value="C06G3.10.1"/>
    <property type="gene ID" value="WBGene00000585"/>
</dbReference>
<dbReference type="GeneID" id="177473"/>
<dbReference type="KEGG" id="cel:CELE_C06G3.10"/>
<dbReference type="UCSC" id="C06G3.10">
    <property type="organism name" value="c. elegans"/>
</dbReference>
<dbReference type="AGR" id="WB:WBGene00000585"/>
<dbReference type="CTD" id="177473"/>
<dbReference type="WormBase" id="C06G3.10">
    <property type="protein sequence ID" value="CE28817"/>
    <property type="gene ID" value="WBGene00000585"/>
    <property type="gene designation" value="cogc-2"/>
</dbReference>
<dbReference type="eggNOG" id="KOG2307">
    <property type="taxonomic scope" value="Eukaryota"/>
</dbReference>
<dbReference type="GeneTree" id="ENSGT00390000012040"/>
<dbReference type="HOGENOM" id="CLU_451516_0_0_1"/>
<dbReference type="InParanoid" id="Q21444"/>
<dbReference type="OMA" id="TFIDKCM"/>
<dbReference type="OrthoDB" id="332281at2759"/>
<dbReference type="PhylomeDB" id="Q21444"/>
<dbReference type="Reactome" id="R-CEL-6807878">
    <property type="pathway name" value="COPI-mediated anterograde transport"/>
</dbReference>
<dbReference type="Reactome" id="R-CEL-6811438">
    <property type="pathway name" value="Intra-Golgi traffic"/>
</dbReference>
<dbReference type="PRO" id="PR:Q21444"/>
<dbReference type="Proteomes" id="UP000001940">
    <property type="component" value="Chromosome IV"/>
</dbReference>
<dbReference type="Bgee" id="WBGene00000585">
    <property type="expression patterns" value="Expressed in germ line (C elegans) and 4 other cell types or tissues"/>
</dbReference>
<dbReference type="GO" id="GO:0000139">
    <property type="term" value="C:Golgi membrane"/>
    <property type="evidence" value="ECO:0007669"/>
    <property type="project" value="UniProtKB-SubCell"/>
</dbReference>
<dbReference type="GO" id="GO:0017119">
    <property type="term" value="C:Golgi transport complex"/>
    <property type="evidence" value="ECO:0000318"/>
    <property type="project" value="GO_Central"/>
</dbReference>
<dbReference type="GO" id="GO:0007030">
    <property type="term" value="P:Golgi organization"/>
    <property type="evidence" value="ECO:0000318"/>
    <property type="project" value="GO_Central"/>
</dbReference>
<dbReference type="GO" id="GO:0035262">
    <property type="term" value="P:gonad morphogenesis"/>
    <property type="evidence" value="ECO:0000315"/>
    <property type="project" value="WormBase"/>
</dbReference>
<dbReference type="GO" id="GO:0006891">
    <property type="term" value="P:intra-Golgi vesicle-mediated transport"/>
    <property type="evidence" value="ECO:0000318"/>
    <property type="project" value="GO_Central"/>
</dbReference>
<dbReference type="GO" id="GO:0015031">
    <property type="term" value="P:protein transport"/>
    <property type="evidence" value="ECO:0007669"/>
    <property type="project" value="UniProtKB-KW"/>
</dbReference>
<dbReference type="GO" id="GO:0030334">
    <property type="term" value="P:regulation of cell migration"/>
    <property type="evidence" value="ECO:0000315"/>
    <property type="project" value="WormBase"/>
</dbReference>
<dbReference type="InterPro" id="IPR009316">
    <property type="entry name" value="COG2"/>
</dbReference>
<dbReference type="InterPro" id="IPR024603">
    <property type="entry name" value="COG_complex_COG2_C"/>
</dbReference>
<dbReference type="InterPro" id="IPR024602">
    <property type="entry name" value="COG_su2_N"/>
</dbReference>
<dbReference type="PANTHER" id="PTHR12961">
    <property type="entry name" value="CONSERVED OLIGOMERIC GOLGI COMPLEX COMPONENT 2"/>
    <property type="match status" value="1"/>
</dbReference>
<dbReference type="PANTHER" id="PTHR12961:SF0">
    <property type="entry name" value="CONSERVED OLIGOMERIC GOLGI COMPLEX SUBUNIT 2"/>
    <property type="match status" value="1"/>
</dbReference>
<dbReference type="Pfam" id="PF12022">
    <property type="entry name" value="COG2_C"/>
    <property type="match status" value="1"/>
</dbReference>
<dbReference type="Pfam" id="PF06148">
    <property type="entry name" value="COG2_N"/>
    <property type="match status" value="1"/>
</dbReference>
<reference key="1">
    <citation type="journal article" date="1994" name="J. Cell Biol.">
        <title>LDLC encodes a brefeldin A-sensitive, peripheral Golgi protein required for normal Golgi function.</title>
        <authorList>
            <person name="Podos S.D."/>
            <person name="Reddy P."/>
            <person name="Ashkenas J."/>
            <person name="Krieger M."/>
        </authorList>
    </citation>
    <scope>NUCLEOTIDE SEQUENCE [MRNA]</scope>
</reference>
<reference key="2">
    <citation type="journal article" date="1998" name="Science">
        <title>Genome sequence of the nematode C. elegans: a platform for investigating biology.</title>
        <authorList>
            <consortium name="The C. elegans sequencing consortium"/>
        </authorList>
    </citation>
    <scope>NUCLEOTIDE SEQUENCE [LARGE SCALE GENOMIC DNA]</scope>
    <source>
        <strain>Bristol N2</strain>
    </source>
</reference>
<protein>
    <recommendedName>
        <fullName>Conserved oligomeric Golgi complex subunit 2</fullName>
        <shortName>COG complex subunit 2</shortName>
    </recommendedName>
    <alternativeName>
        <fullName>Component of oligomeric Golgi complex 2</fullName>
    </alternativeName>
    <alternativeName>
        <fullName>LDLC protein homolog</fullName>
    </alternativeName>
</protein>
<name>COG2_CAEEL</name>
<gene>
    <name type="primary">cogc-2</name>
    <name type="synonym">cgo-2</name>
    <name type="synonym">cog-2</name>
    <name type="synonym">ldlc</name>
    <name type="ORF">C06G3.10</name>
</gene>
<sequence>MGTLHGEKTMFASPNTFYIDESKLCFNKTHFNREDFNVERFMNLARQKSDLKTIQQDLRLYLKSVQNSMIELINDDYADFVHLSSNLVSLQDSLNKIEQDINRIWDEFKESTRESVGMAERIEQKCDELCSNREKQIEIRDRIYFLVAIEKLSEMLLHPPRKCSALWLQKAASFASELKGSTFPHSEEENAAEKIILSQLEAVLCAEGVRSAAGDCQNLPLIYSILSLTESTHSLTALLVSDLLYAEFVNEKHDESNQLKLLKQVFESVKKMRETWAEKMGTEHFRGNIRRFLDETLLTFILTFIDKCMGAVAVPSDTRLFHECFLLTQEFIDNWPSSHTCRAMLKSIRDKFNLLVYFKLETHRFGKQCDQLMSPEMFAEPETSENRENTPQLHCGVSRAIITAIEHVWSDDVYLPPIVDKLWDFTLKLLLKHFSWSQTMKNYFMEEKRDWTSMVTLRSDTGNLHQLVFDFALESIWGKFHDITVDTAPFGQCLTKHGRSIDSLCVQIDDSIIEMFSEVLHQEIAQVSDVPKQYRWTKKSPPTTHSKYVVTAIEMVENLKEKLCCEEHPHTDEIVRKVNLSAFNYFVGKGNEVLDSVEATGSSLSRFKRKTTTDSGSTVTDDDKIKQQIYHDAKYFLSYAENLVFSQADLTGLQEVVNRFDKDARSAIVQEKNQNEEAGNA</sequence>
<evidence type="ECO:0000250" key="1"/>
<evidence type="ECO:0000305" key="2"/>